<dbReference type="EC" id="3.2.1.28" evidence="1"/>
<dbReference type="EMBL" id="CP001164">
    <property type="protein sequence ID" value="ACI35052.1"/>
    <property type="molecule type" value="Genomic_DNA"/>
</dbReference>
<dbReference type="RefSeq" id="WP_000934216.1">
    <property type="nucleotide sequence ID" value="NC_011353.1"/>
</dbReference>
<dbReference type="SMR" id="B5YVG5"/>
<dbReference type="CAZy" id="GH37">
    <property type="family name" value="Glycoside Hydrolase Family 37"/>
</dbReference>
<dbReference type="KEGG" id="ecf:ECH74115_4882"/>
<dbReference type="HOGENOM" id="CLU_006451_3_1_6"/>
<dbReference type="UniPathway" id="UPA00300">
    <property type="reaction ID" value="UER00535"/>
</dbReference>
<dbReference type="GO" id="GO:0005737">
    <property type="term" value="C:cytoplasm"/>
    <property type="evidence" value="ECO:0007669"/>
    <property type="project" value="UniProtKB-SubCell"/>
</dbReference>
<dbReference type="GO" id="GO:0004555">
    <property type="term" value="F:alpha,alpha-trehalase activity"/>
    <property type="evidence" value="ECO:0007669"/>
    <property type="project" value="UniProtKB-UniRule"/>
</dbReference>
<dbReference type="GO" id="GO:0071474">
    <property type="term" value="P:cellular hyperosmotic response"/>
    <property type="evidence" value="ECO:0007669"/>
    <property type="project" value="InterPro"/>
</dbReference>
<dbReference type="GO" id="GO:0005993">
    <property type="term" value="P:trehalose catabolic process"/>
    <property type="evidence" value="ECO:0007669"/>
    <property type="project" value="UniProtKB-UniRule"/>
</dbReference>
<dbReference type="FunFam" id="1.50.10.10:FF:000003">
    <property type="entry name" value="Cytoplasmic trehalase"/>
    <property type="match status" value="1"/>
</dbReference>
<dbReference type="Gene3D" id="1.50.10.10">
    <property type="match status" value="1"/>
</dbReference>
<dbReference type="HAMAP" id="MF_01059">
    <property type="entry name" value="Cyt_trehalase"/>
    <property type="match status" value="1"/>
</dbReference>
<dbReference type="InterPro" id="IPR008928">
    <property type="entry name" value="6-hairpin_glycosidase_sf"/>
</dbReference>
<dbReference type="InterPro" id="IPR012341">
    <property type="entry name" value="6hp_glycosidase-like_sf"/>
</dbReference>
<dbReference type="InterPro" id="IPR023715">
    <property type="entry name" value="Cyt_trehalase"/>
</dbReference>
<dbReference type="InterPro" id="IPR001661">
    <property type="entry name" value="Glyco_hydro_37"/>
</dbReference>
<dbReference type="InterPro" id="IPR018232">
    <property type="entry name" value="Glyco_hydro_37_CS"/>
</dbReference>
<dbReference type="NCBIfam" id="NF009773">
    <property type="entry name" value="PRK13270.1"/>
    <property type="match status" value="1"/>
</dbReference>
<dbReference type="NCBIfam" id="NF009774">
    <property type="entry name" value="PRK13271.1"/>
    <property type="match status" value="1"/>
</dbReference>
<dbReference type="PANTHER" id="PTHR23403:SF8">
    <property type="entry name" value="CYTOPLASMIC TREHALASE"/>
    <property type="match status" value="1"/>
</dbReference>
<dbReference type="PANTHER" id="PTHR23403">
    <property type="entry name" value="TREHALASE"/>
    <property type="match status" value="1"/>
</dbReference>
<dbReference type="Pfam" id="PF01204">
    <property type="entry name" value="Trehalase"/>
    <property type="match status" value="1"/>
</dbReference>
<dbReference type="PRINTS" id="PR00744">
    <property type="entry name" value="GLHYDRLASE37"/>
</dbReference>
<dbReference type="SUPFAM" id="SSF48208">
    <property type="entry name" value="Six-hairpin glycosidases"/>
    <property type="match status" value="1"/>
</dbReference>
<dbReference type="PROSITE" id="PS00927">
    <property type="entry name" value="TREHALASE_1"/>
    <property type="match status" value="1"/>
</dbReference>
<dbReference type="PROSITE" id="PS00928">
    <property type="entry name" value="TREHALASE_2"/>
    <property type="match status" value="1"/>
</dbReference>
<gene>
    <name evidence="1" type="primary">treF</name>
    <name type="ordered locus">ECH74115_4882</name>
</gene>
<sequence length="549" mass="63697">MLNQKIQNPNPDELMIEVDLCYELDPYELKLDEMIEAEPEPEMIEGLPASDALTPADRYLELFEHVQSAKIFPDSKTFPDCAPKMDPLDILIRYRKVRRHRDFDLRKFVENHFWLPEVYSSEYVSDPQNSLKEHIDQLWPVLTREPQDHIPWSSLLALPQSYIVPGGRFSETYYWDSYFTMLGLAESGREDLLKCMADNFAWMIENYGHIPNGNRTYYLSRSQPPVFALMVELFEEDGVRGARRYLDHLKMEYAFWMDGAESLIPNQAYRHVVRMPDGSLLNRYWDDRDTPRDESWLEDVETAKHSGRPPNEVYRDLRAGAASGWDYSSRWLRDTGRLASIRTTQFIPIDLNAFLFKLESAIANISALKGEKETEALFRQKASARRDAVNRYLWDDENGIYRDYDWRREQLALFSAAAIVPLYVGMANHEQADRLANAVRSRLLTPGGILASEYETGEQWDKPNGWAPLQWMAIQGFKMYGDDLLGDEIARSWLKTVNQFYLEQHKLIEKYHIADGVPREGGGGEYPLQDGFGWTNGVVRRLIGLYGEP</sequence>
<accession>B5YVG5</accession>
<keyword id="KW-0963">Cytoplasm</keyword>
<keyword id="KW-0326">Glycosidase</keyword>
<keyword id="KW-0378">Hydrolase</keyword>
<reference key="1">
    <citation type="journal article" date="2011" name="Proc. Natl. Acad. Sci. U.S.A.">
        <title>Genomic anatomy of Escherichia coli O157:H7 outbreaks.</title>
        <authorList>
            <person name="Eppinger M."/>
            <person name="Mammel M.K."/>
            <person name="Leclerc J.E."/>
            <person name="Ravel J."/>
            <person name="Cebula T.A."/>
        </authorList>
    </citation>
    <scope>NUCLEOTIDE SEQUENCE [LARGE SCALE GENOMIC DNA]</scope>
    <source>
        <strain>EC4115 / EHEC</strain>
    </source>
</reference>
<name>TREF_ECO5E</name>
<feature type="chain" id="PRO_1000136400" description="Cytoplasmic trehalase">
    <location>
        <begin position="1"/>
        <end position="549"/>
    </location>
</feature>
<feature type="active site" description="Proton donor/acceptor" evidence="1">
    <location>
        <position position="326"/>
    </location>
</feature>
<feature type="active site" description="Proton donor/acceptor" evidence="1">
    <location>
        <position position="509"/>
    </location>
</feature>
<feature type="binding site" evidence="1">
    <location>
        <position position="168"/>
    </location>
    <ligand>
        <name>substrate</name>
    </ligand>
</feature>
<feature type="binding site" evidence="1">
    <location>
        <begin position="175"/>
        <end position="176"/>
    </location>
    <ligand>
        <name>substrate</name>
    </ligand>
</feature>
<feature type="binding site" evidence="1">
    <location>
        <position position="212"/>
    </location>
    <ligand>
        <name>substrate</name>
    </ligand>
</feature>
<feature type="binding site" evidence="1">
    <location>
        <begin position="221"/>
        <end position="223"/>
    </location>
    <ligand>
        <name>substrate</name>
    </ligand>
</feature>
<feature type="binding site" evidence="1">
    <location>
        <begin position="292"/>
        <end position="294"/>
    </location>
    <ligand>
        <name>substrate</name>
    </ligand>
</feature>
<feature type="binding site" evidence="1">
    <location>
        <position position="324"/>
    </location>
    <ligand>
        <name>substrate</name>
    </ligand>
</feature>
<feature type="binding site" evidence="1">
    <location>
        <position position="525"/>
    </location>
    <ligand>
        <name>substrate</name>
    </ligand>
</feature>
<proteinExistence type="inferred from homology"/>
<evidence type="ECO:0000255" key="1">
    <source>
        <dbReference type="HAMAP-Rule" id="MF_01059"/>
    </source>
</evidence>
<protein>
    <recommendedName>
        <fullName evidence="1">Cytoplasmic trehalase</fullName>
        <ecNumber evidence="1">3.2.1.28</ecNumber>
    </recommendedName>
    <alternativeName>
        <fullName evidence="1">Alpha,alpha-trehalase</fullName>
    </alternativeName>
    <alternativeName>
        <fullName evidence="1">Alpha,alpha-trehalose glucohydrolase</fullName>
    </alternativeName>
</protein>
<organism>
    <name type="scientific">Escherichia coli O157:H7 (strain EC4115 / EHEC)</name>
    <dbReference type="NCBI Taxonomy" id="444450"/>
    <lineage>
        <taxon>Bacteria</taxon>
        <taxon>Pseudomonadati</taxon>
        <taxon>Pseudomonadota</taxon>
        <taxon>Gammaproteobacteria</taxon>
        <taxon>Enterobacterales</taxon>
        <taxon>Enterobacteriaceae</taxon>
        <taxon>Escherichia</taxon>
    </lineage>
</organism>
<comment type="function">
    <text evidence="1">Hydrolyzes trehalose to glucose. Could be involved, in cells returning to low osmolarity conditions, in the utilization of the accumulated cytoplasmic trehalose, which was synthesized in response to high osmolarity.</text>
</comment>
<comment type="catalytic activity">
    <reaction evidence="1">
        <text>alpha,alpha-trehalose + H2O = alpha-D-glucose + beta-D-glucose</text>
        <dbReference type="Rhea" id="RHEA:32675"/>
        <dbReference type="ChEBI" id="CHEBI:15377"/>
        <dbReference type="ChEBI" id="CHEBI:15903"/>
        <dbReference type="ChEBI" id="CHEBI:16551"/>
        <dbReference type="ChEBI" id="CHEBI:17925"/>
        <dbReference type="EC" id="3.2.1.28"/>
    </reaction>
</comment>
<comment type="pathway">
    <text evidence="1">Glycan degradation; trehalose degradation; D-glucose from alpha,alpha-trehalose: step 1/1.</text>
</comment>
<comment type="subunit">
    <text evidence="1">Monomer.</text>
</comment>
<comment type="subcellular location">
    <subcellularLocation>
        <location evidence="1">Cytoplasm</location>
    </subcellularLocation>
</comment>
<comment type="similarity">
    <text evidence="1">Belongs to the glycosyl hydrolase 37 family.</text>
</comment>